<dbReference type="EMBL" id="AE000511">
    <property type="protein sequence ID" value="AAD07681.1"/>
    <property type="molecule type" value="Genomic_DNA"/>
</dbReference>
<dbReference type="PIR" id="H64596">
    <property type="entry name" value="H64596"/>
</dbReference>
<dbReference type="RefSeq" id="NP_207411.1">
    <property type="nucleotide sequence ID" value="NC_000915.1"/>
</dbReference>
<dbReference type="RefSeq" id="WP_000251148.1">
    <property type="nucleotide sequence ID" value="NC_018939.1"/>
</dbReference>
<dbReference type="SMR" id="O25337"/>
<dbReference type="IntAct" id="O25337">
    <property type="interactions" value="1"/>
</dbReference>
<dbReference type="STRING" id="85962.HP_0616"/>
<dbReference type="PaxDb" id="85962-C694_03185"/>
<dbReference type="DNASU" id="898950"/>
<dbReference type="EnsemblBacteria" id="AAD07681">
    <property type="protein sequence ID" value="AAD07681"/>
    <property type="gene ID" value="HP_0616"/>
</dbReference>
<dbReference type="KEGG" id="heo:C694_03185"/>
<dbReference type="KEGG" id="hpy:HP_0616"/>
<dbReference type="PATRIC" id="fig|85962.47.peg.664"/>
<dbReference type="eggNOG" id="COG0784">
    <property type="taxonomic scope" value="Bacteria"/>
</dbReference>
<dbReference type="eggNOG" id="COG0835">
    <property type="taxonomic scope" value="Bacteria"/>
</dbReference>
<dbReference type="InParanoid" id="O25337"/>
<dbReference type="OrthoDB" id="5477257at2"/>
<dbReference type="PhylomeDB" id="O25337"/>
<dbReference type="Proteomes" id="UP000000429">
    <property type="component" value="Chromosome"/>
</dbReference>
<dbReference type="GO" id="GO:0006935">
    <property type="term" value="P:chemotaxis"/>
    <property type="evidence" value="ECO:0000318"/>
    <property type="project" value="GO_Central"/>
</dbReference>
<dbReference type="GO" id="GO:0000160">
    <property type="term" value="P:phosphorelay signal transduction system"/>
    <property type="evidence" value="ECO:0007669"/>
    <property type="project" value="InterPro"/>
</dbReference>
<dbReference type="CDD" id="cd00588">
    <property type="entry name" value="CheW_like"/>
    <property type="match status" value="1"/>
</dbReference>
<dbReference type="Gene3D" id="3.40.50.2300">
    <property type="match status" value="1"/>
</dbReference>
<dbReference type="Gene3D" id="2.40.50.180">
    <property type="entry name" value="CheA-289, Domain 4"/>
    <property type="match status" value="1"/>
</dbReference>
<dbReference type="Gene3D" id="2.30.30.40">
    <property type="entry name" value="SH3 Domains"/>
    <property type="match status" value="1"/>
</dbReference>
<dbReference type="InterPro" id="IPR024181">
    <property type="entry name" value="Chemotax_regulator_CheV"/>
</dbReference>
<dbReference type="InterPro" id="IPR036061">
    <property type="entry name" value="CheW-like_dom_sf"/>
</dbReference>
<dbReference type="InterPro" id="IPR002545">
    <property type="entry name" value="CheW-lke_dom"/>
</dbReference>
<dbReference type="InterPro" id="IPR011006">
    <property type="entry name" value="CheY-like_superfamily"/>
</dbReference>
<dbReference type="InterPro" id="IPR001789">
    <property type="entry name" value="Sig_transdc_resp-reg_receiver"/>
</dbReference>
<dbReference type="PANTHER" id="PTHR47233">
    <property type="entry name" value="CHEMOTAXIS PROTEIN CHEV"/>
    <property type="match status" value="1"/>
</dbReference>
<dbReference type="PANTHER" id="PTHR47233:SF3">
    <property type="entry name" value="CHEMOTAXIS PROTEIN CHEV"/>
    <property type="match status" value="1"/>
</dbReference>
<dbReference type="Pfam" id="PF01584">
    <property type="entry name" value="CheW"/>
    <property type="match status" value="1"/>
</dbReference>
<dbReference type="Pfam" id="PF00072">
    <property type="entry name" value="Response_reg"/>
    <property type="match status" value="1"/>
</dbReference>
<dbReference type="PIRSF" id="PIRSF002867">
    <property type="entry name" value="CheV"/>
    <property type="match status" value="1"/>
</dbReference>
<dbReference type="SMART" id="SM00260">
    <property type="entry name" value="CheW"/>
    <property type="match status" value="1"/>
</dbReference>
<dbReference type="SMART" id="SM00448">
    <property type="entry name" value="REC"/>
    <property type="match status" value="1"/>
</dbReference>
<dbReference type="SUPFAM" id="SSF50341">
    <property type="entry name" value="CheW-like"/>
    <property type="match status" value="1"/>
</dbReference>
<dbReference type="SUPFAM" id="SSF52172">
    <property type="entry name" value="CheY-like"/>
    <property type="match status" value="1"/>
</dbReference>
<dbReference type="PROSITE" id="PS50851">
    <property type="entry name" value="CHEW"/>
    <property type="match status" value="1"/>
</dbReference>
<dbReference type="PROSITE" id="PS50110">
    <property type="entry name" value="RESPONSE_REGULATORY"/>
    <property type="match status" value="1"/>
</dbReference>
<gene>
    <name evidence="5" type="primary">cheV2</name>
    <name type="ordered locus">HP_0616</name>
</gene>
<name>CHEV2_HELPY</name>
<proteinExistence type="evidence at protein level"/>
<feature type="chain" id="PRO_0000448750" description="Chemotaxis protein CheV2">
    <location>
        <begin position="1"/>
        <end position="313"/>
    </location>
</feature>
<feature type="domain" description="CheW-like" evidence="1">
    <location>
        <begin position="16"/>
        <end position="172"/>
    </location>
</feature>
<feature type="domain" description="Response regulatory" evidence="2">
    <location>
        <begin position="193"/>
        <end position="313"/>
    </location>
</feature>
<feature type="modified residue" description="4-aspartylphosphate" evidence="2">
    <location>
        <position position="246"/>
    </location>
</feature>
<organism>
    <name type="scientific">Helicobacter pylori (strain ATCC 700392 / 26695)</name>
    <name type="common">Campylobacter pylori</name>
    <dbReference type="NCBI Taxonomy" id="85962"/>
    <lineage>
        <taxon>Bacteria</taxon>
        <taxon>Pseudomonadati</taxon>
        <taxon>Campylobacterota</taxon>
        <taxon>Epsilonproteobacteria</taxon>
        <taxon>Campylobacterales</taxon>
        <taxon>Helicobacteraceae</taxon>
        <taxon>Helicobacter</taxon>
    </lineage>
</organism>
<keyword id="KW-0597">Phosphoprotein</keyword>
<keyword id="KW-1185">Reference proteome</keyword>
<evidence type="ECO:0000255" key="1">
    <source>
        <dbReference type="PROSITE-ProRule" id="PRU00052"/>
    </source>
</evidence>
<evidence type="ECO:0000255" key="2">
    <source>
        <dbReference type="PROSITE-ProRule" id="PRU00169"/>
    </source>
</evidence>
<evidence type="ECO:0000269" key="3">
    <source>
    </source>
</evidence>
<evidence type="ECO:0000269" key="4">
    <source>
    </source>
</evidence>
<evidence type="ECO:0000303" key="5">
    <source>
    </source>
</evidence>
<protein>
    <recommendedName>
        <fullName evidence="5">Chemotaxis protein CheV2</fullName>
    </recommendedName>
</protein>
<comment type="function">
    <text evidence="3 4">Plays a role in chemotaxis signal transduction system in order to colonize the host stomach. May act as a phosphate sink to control the flow of phosphate to CheAY.</text>
</comment>
<comment type="PTM">
    <text evidence="3">Phosphorylated; probably by transfer of CheAY phosphate group.</text>
</comment>
<comment type="disruption phenotype">
    <text evidence="3 4">Deletion mutant is fully chemotactic and forms swarms the same way as wild-type strain (PubMed:11535789). Mutant shows however defects in mouse colonization (PubMed:19332820).</text>
</comment>
<sequence>MVRDIDKTTSLHLNNEAQFLCFRLDAEKDAQLYGMNIFKIREIIHYDGEVTEILGGSDGVMLGFLSVRGESIPLVDVKRWLHYNANDPSRDLKECSVKDDHNLVIVCHFSNHSIALKVLKIERIIHKNWTEISAGDKQGINEEGKLSAITRFDEERVVQILDVEKMISDVFPSLKDLDDLTLRCIEAIQSQKLILIAEDSLSALKTLEKIVQTLELRYLAFPNGRELLDYLYEKEHYQQVGVVITDLEMPNISGFEVLKTIKADHRTEHLPVIINSSMSSDSNRQLAQSLEADGFVVKSNILEIHEMLKKTLS</sequence>
<accession>O25337</accession>
<reference key="1">
    <citation type="journal article" date="1997" name="Nature">
        <title>The complete genome sequence of the gastric pathogen Helicobacter pylori.</title>
        <authorList>
            <person name="Tomb J.-F."/>
            <person name="White O."/>
            <person name="Kerlavage A.R."/>
            <person name="Clayton R.A."/>
            <person name="Sutton G.G."/>
            <person name="Fleischmann R.D."/>
            <person name="Ketchum K.A."/>
            <person name="Klenk H.-P."/>
            <person name="Gill S.R."/>
            <person name="Dougherty B.A."/>
            <person name="Nelson K.E."/>
            <person name="Quackenbush J."/>
            <person name="Zhou L."/>
            <person name="Kirkness E.F."/>
            <person name="Peterson S.N."/>
            <person name="Loftus B.J."/>
            <person name="Richardson D.L."/>
            <person name="Dodson R.J."/>
            <person name="Khalak H.G."/>
            <person name="Glodek A."/>
            <person name="McKenney K."/>
            <person name="FitzGerald L.M."/>
            <person name="Lee N."/>
            <person name="Adams M.D."/>
            <person name="Hickey E.K."/>
            <person name="Berg D.E."/>
            <person name="Gocayne J.D."/>
            <person name="Utterback T.R."/>
            <person name="Peterson J.D."/>
            <person name="Kelley J.M."/>
            <person name="Cotton M.D."/>
            <person name="Weidman J.F."/>
            <person name="Fujii C."/>
            <person name="Bowman C."/>
            <person name="Watthey L."/>
            <person name="Wallin E."/>
            <person name="Hayes W.S."/>
            <person name="Borodovsky M."/>
            <person name="Karp P.D."/>
            <person name="Smith H.O."/>
            <person name="Fraser C.M."/>
            <person name="Venter J.C."/>
        </authorList>
    </citation>
    <scope>NUCLEOTIDE SEQUENCE [LARGE SCALE GENOMIC DNA]</scope>
    <source>
        <strain>ATCC 700392 / 26695</strain>
    </source>
</reference>
<reference key="2">
    <citation type="journal article" date="2001" name="Microbiology">
        <title>Chemotaxis in the human gastric pathogen Helicobacter pylori: different roles for CheW and the three CheV paralogues, and evidence for CheV2 phosphorylation.</title>
        <authorList>
            <person name="Pittman M.S."/>
            <person name="Goodwin M."/>
            <person name="Kelly D.J."/>
        </authorList>
    </citation>
    <scope>FUNCTION</scope>
    <scope>DISRUPTION PHENOTYPE</scope>
    <scope>PHOSPHORYLATION</scope>
</reference>
<reference key="3">
    <citation type="journal article" date="2009" name="Microbiology">
        <title>A fixed-time diffusion analysis method determines that the three cheV genes of Helicobacter pylori differentially affect motility.</title>
        <authorList>
            <person name="Lowenthal A.C."/>
            <person name="Simon C."/>
            <person name="Fair A.S."/>
            <person name="Mehmood K."/>
            <person name="Terry K."/>
            <person name="Anastasia S."/>
            <person name="Ottemann K.M."/>
        </authorList>
    </citation>
    <scope>FUNCTION</scope>
    <scope>DISRUPTION PHENOTYPE</scope>
</reference>